<protein>
    <recommendedName>
        <fullName evidence="1">H(+)/Cl(-) exchange transporter ClcA</fullName>
    </recommendedName>
</protein>
<dbReference type="EMBL" id="CP000647">
    <property type="protein sequence ID" value="ABR75630.1"/>
    <property type="molecule type" value="Genomic_DNA"/>
</dbReference>
<dbReference type="SMR" id="A6T4V9"/>
<dbReference type="STRING" id="272620.KPN_00170"/>
<dbReference type="PaxDb" id="272620-KPN_00170"/>
<dbReference type="EnsemblBacteria" id="ABR75630">
    <property type="protein sequence ID" value="ABR75630"/>
    <property type="gene ID" value="KPN_00170"/>
</dbReference>
<dbReference type="KEGG" id="kpn:KPN_00170"/>
<dbReference type="HOGENOM" id="CLU_015263_7_0_6"/>
<dbReference type="Proteomes" id="UP000000265">
    <property type="component" value="Chromosome"/>
</dbReference>
<dbReference type="GO" id="GO:0005886">
    <property type="term" value="C:plasma membrane"/>
    <property type="evidence" value="ECO:0007669"/>
    <property type="project" value="UniProtKB-SubCell"/>
</dbReference>
<dbReference type="GO" id="GO:0015297">
    <property type="term" value="F:antiporter activity"/>
    <property type="evidence" value="ECO:0007669"/>
    <property type="project" value="UniProtKB-UniRule"/>
</dbReference>
<dbReference type="GO" id="GO:0005247">
    <property type="term" value="F:voltage-gated chloride channel activity"/>
    <property type="evidence" value="ECO:0007669"/>
    <property type="project" value="TreeGrafter"/>
</dbReference>
<dbReference type="CDD" id="cd01031">
    <property type="entry name" value="EriC"/>
    <property type="match status" value="1"/>
</dbReference>
<dbReference type="FunFam" id="1.10.3080.10:FF:000005">
    <property type="entry name" value="H(+)/Cl(-) exchange transporter ClcA"/>
    <property type="match status" value="1"/>
</dbReference>
<dbReference type="Gene3D" id="1.10.3080.10">
    <property type="entry name" value="Clc chloride channel"/>
    <property type="match status" value="1"/>
</dbReference>
<dbReference type="HAMAP" id="MF_01128">
    <property type="entry name" value="CLC_ClcA"/>
    <property type="match status" value="1"/>
</dbReference>
<dbReference type="InterPro" id="IPR023861">
    <property type="entry name" value="Cl-channel_ClcA"/>
</dbReference>
<dbReference type="InterPro" id="IPR014743">
    <property type="entry name" value="Cl-channel_core"/>
</dbReference>
<dbReference type="InterPro" id="IPR001807">
    <property type="entry name" value="ClC"/>
</dbReference>
<dbReference type="NCBIfam" id="NF003640">
    <property type="entry name" value="PRK05277.1"/>
    <property type="match status" value="1"/>
</dbReference>
<dbReference type="PANTHER" id="PTHR45711">
    <property type="entry name" value="CHLORIDE CHANNEL PROTEIN"/>
    <property type="match status" value="1"/>
</dbReference>
<dbReference type="PANTHER" id="PTHR45711:SF6">
    <property type="entry name" value="CHLORIDE CHANNEL PROTEIN"/>
    <property type="match status" value="1"/>
</dbReference>
<dbReference type="Pfam" id="PF00654">
    <property type="entry name" value="Voltage_CLC"/>
    <property type="match status" value="1"/>
</dbReference>
<dbReference type="PRINTS" id="PR00762">
    <property type="entry name" value="CLCHANNEL"/>
</dbReference>
<dbReference type="SUPFAM" id="SSF81340">
    <property type="entry name" value="Clc chloride channel"/>
    <property type="match status" value="1"/>
</dbReference>
<keyword id="KW-0050">Antiport</keyword>
<keyword id="KW-0997">Cell inner membrane</keyword>
<keyword id="KW-1003">Cell membrane</keyword>
<keyword id="KW-0868">Chloride</keyword>
<keyword id="KW-0406">Ion transport</keyword>
<keyword id="KW-0472">Membrane</keyword>
<keyword id="KW-0812">Transmembrane</keyword>
<keyword id="KW-1133">Transmembrane helix</keyword>
<keyword id="KW-0813">Transport</keyword>
<comment type="function">
    <text evidence="1">Proton-coupled chloride transporter. Functions as antiport system and exchanges two chloride ions for 1 proton. Probably acts as an electrical shunt for an outwardly-directed proton pump that is linked to amino acid decarboxylation, as part of the extreme acid resistance (XAR) response.</text>
</comment>
<comment type="catalytic activity">
    <reaction evidence="1">
        <text>2 chloride(in) + H(+)(out) = 2 chloride(out) + H(+)(in)</text>
        <dbReference type="Rhea" id="RHEA:29567"/>
        <dbReference type="ChEBI" id="CHEBI:15378"/>
        <dbReference type="ChEBI" id="CHEBI:17996"/>
    </reaction>
</comment>
<comment type="subunit">
    <text evidence="1">Homodimer.</text>
</comment>
<comment type="subcellular location">
    <subcellularLocation>
        <location evidence="1">Cell inner membrane</location>
        <topology evidence="1">Multi-pass membrane protein</topology>
    </subcellularLocation>
</comment>
<comment type="similarity">
    <text evidence="1">Belongs to the chloride channel (TC 2.A.49) family. ClcA subfamily.</text>
</comment>
<proteinExistence type="inferred from homology"/>
<gene>
    <name evidence="1" type="primary">clcA</name>
    <name evidence="1" type="synonym">eriC</name>
    <name type="ordered locus">KPN78578_01690</name>
    <name type="ORF">KPN_00170</name>
</gene>
<accession>A6T4V9</accession>
<organism>
    <name type="scientific">Klebsiella pneumoniae subsp. pneumoniae (strain ATCC 700721 / MGH 78578)</name>
    <dbReference type="NCBI Taxonomy" id="272620"/>
    <lineage>
        <taxon>Bacteria</taxon>
        <taxon>Pseudomonadati</taxon>
        <taxon>Pseudomonadota</taxon>
        <taxon>Gammaproteobacteria</taxon>
        <taxon>Enterobacterales</taxon>
        <taxon>Enterobacteriaceae</taxon>
        <taxon>Klebsiella/Raoultella group</taxon>
        <taxon>Klebsiella</taxon>
        <taxon>Klebsiella pneumoniae complex</taxon>
    </lineage>
</organism>
<reference key="1">
    <citation type="submission" date="2006-09" db="EMBL/GenBank/DDBJ databases">
        <authorList>
            <consortium name="The Klebsiella pneumonia Genome Sequencing Project"/>
            <person name="McClelland M."/>
            <person name="Sanderson E.K."/>
            <person name="Spieth J."/>
            <person name="Clifton W.S."/>
            <person name="Latreille P."/>
            <person name="Sabo A."/>
            <person name="Pepin K."/>
            <person name="Bhonagiri V."/>
            <person name="Porwollik S."/>
            <person name="Ali J."/>
            <person name="Wilson R.K."/>
        </authorList>
    </citation>
    <scope>NUCLEOTIDE SEQUENCE [LARGE SCALE GENOMIC DNA]</scope>
    <source>
        <strain>ATCC 700721 / MGH 78578</strain>
    </source>
</reference>
<feature type="chain" id="PRO_1000065380" description="H(+)/Cl(-) exchange transporter ClcA">
    <location>
        <begin position="1"/>
        <end position="472"/>
    </location>
</feature>
<feature type="topological domain" description="Cytoplasmic" evidence="1">
    <location>
        <begin position="1"/>
        <end position="32"/>
    </location>
</feature>
<feature type="transmembrane region" description="Helical" evidence="1">
    <location>
        <begin position="33"/>
        <end position="69"/>
    </location>
</feature>
<feature type="topological domain" description="Periplasmic" evidence="1">
    <location>
        <begin position="70"/>
        <end position="76"/>
    </location>
</feature>
<feature type="transmembrane region" description="Helical" evidence="1">
    <location>
        <begin position="77"/>
        <end position="100"/>
    </location>
</feature>
<feature type="intramembrane region" description="Helical" evidence="1">
    <location>
        <begin position="109"/>
        <end position="116"/>
    </location>
</feature>
<feature type="topological domain" description="Cytoplasmic" evidence="1">
    <location>
        <begin position="117"/>
        <end position="123"/>
    </location>
</feature>
<feature type="transmembrane region" description="Helical" evidence="1">
    <location>
        <begin position="124"/>
        <end position="141"/>
    </location>
</feature>
<feature type="transmembrane region" description="Helical" evidence="1">
    <location>
        <begin position="148"/>
        <end position="166"/>
    </location>
</feature>
<feature type="topological domain" description="Cytoplasmic" evidence="1">
    <location>
        <begin position="167"/>
        <end position="176"/>
    </location>
</feature>
<feature type="intramembrane region" description="Helical" evidence="1">
    <location>
        <begin position="177"/>
        <end position="189"/>
    </location>
</feature>
<feature type="intramembrane region" description="Helical" evidence="1">
    <location>
        <begin position="193"/>
        <end position="201"/>
    </location>
</feature>
<feature type="topological domain" description="Cytoplasmic" evidence="1">
    <location>
        <begin position="202"/>
        <end position="214"/>
    </location>
</feature>
<feature type="transmembrane region" description="Helical" evidence="1">
    <location>
        <begin position="215"/>
        <end position="232"/>
    </location>
</feature>
<feature type="topological domain" description="Periplasmic" evidence="1">
    <location>
        <begin position="233"/>
        <end position="252"/>
    </location>
</feature>
<feature type="transmembrane region" description="Helical" evidence="1">
    <location>
        <begin position="253"/>
        <end position="281"/>
    </location>
</feature>
<feature type="topological domain" description="Cytoplasmic" evidence="1">
    <location>
        <begin position="282"/>
        <end position="287"/>
    </location>
</feature>
<feature type="transmembrane region" description="Helical" evidence="1">
    <location>
        <begin position="288"/>
        <end position="309"/>
    </location>
</feature>
<feature type="topological domain" description="Periplasmic" evidence="1">
    <location>
        <begin position="310"/>
        <end position="329"/>
    </location>
</feature>
<feature type="transmembrane region" description="Helical" evidence="1">
    <location>
        <begin position="330"/>
        <end position="349"/>
    </location>
</feature>
<feature type="transmembrane region" description="Helical" evidence="1">
    <location>
        <begin position="355"/>
        <end position="376"/>
    </location>
</feature>
<feature type="topological domain" description="Periplasmic" evidence="1">
    <location>
        <begin position="377"/>
        <end position="386"/>
    </location>
</feature>
<feature type="intramembrane region" description="Helical" evidence="1">
    <location>
        <begin position="387"/>
        <end position="401"/>
    </location>
</feature>
<feature type="intramembrane region" description="Note=Loop between two helices" evidence="1">
    <location>
        <begin position="402"/>
        <end position="404"/>
    </location>
</feature>
<feature type="intramembrane region" description="Helical" evidence="1">
    <location>
        <begin position="405"/>
        <end position="416"/>
    </location>
</feature>
<feature type="intramembrane region" description="Note=Loop between two helices" evidence="1">
    <location>
        <begin position="417"/>
        <end position="421"/>
    </location>
</feature>
<feature type="transmembrane region" description="Helical" evidence="1">
    <location>
        <begin position="422"/>
        <end position="438"/>
    </location>
</feature>
<feature type="topological domain" description="Cytoplasmic" evidence="1">
    <location>
        <begin position="439"/>
        <end position="472"/>
    </location>
</feature>
<feature type="short sequence motif" description="Selectivity filter part_1" evidence="1">
    <location>
        <begin position="106"/>
        <end position="110"/>
    </location>
</feature>
<feature type="short sequence motif" description="Selectivity filter part_2" evidence="1">
    <location>
        <begin position="146"/>
        <end position="150"/>
    </location>
</feature>
<feature type="short sequence motif" description="Selectivity filter part_3" evidence="1">
    <location>
        <begin position="355"/>
        <end position="359"/>
    </location>
</feature>
<feature type="binding site" evidence="1">
    <location>
        <position position="107"/>
    </location>
    <ligand>
        <name>chloride</name>
        <dbReference type="ChEBI" id="CHEBI:17996"/>
    </ligand>
</feature>
<feature type="binding site" evidence="1">
    <location>
        <position position="356"/>
    </location>
    <ligand>
        <name>chloride</name>
        <dbReference type="ChEBI" id="CHEBI:17996"/>
    </ligand>
</feature>
<feature type="binding site" evidence="1">
    <location>
        <position position="357"/>
    </location>
    <ligand>
        <name>chloride</name>
        <dbReference type="ChEBI" id="CHEBI:17996"/>
    </ligand>
</feature>
<feature type="binding site" evidence="1">
    <location>
        <position position="445"/>
    </location>
    <ligand>
        <name>chloride</name>
        <dbReference type="ChEBI" id="CHEBI:17996"/>
    </ligand>
</feature>
<feature type="site" description="Mediates proton transfer from the outer aqueous phase to the interior of the protein; involved in linking H(+) and Cl(-) transport" evidence="1">
    <location>
        <position position="148"/>
    </location>
</feature>
<feature type="site" description="Mediates proton transfer from the protein to the inner aqueous phase" evidence="1">
    <location>
        <position position="203"/>
    </location>
</feature>
<sequence length="472" mass="50481">MKAETPSFEAHQFVRVRRGDAVRRLIQRDKTPLAVLFMAAVVGTLAGLVGVAFEKSVNWVQNQRIGALAQVADHWYLVWPLAFILSALLAMVGYFLVRRFAPEAGGSGIPEIEGALEELRPVRWWRVLPVKFVGGMGTLGAGMVLGREGPMVQLGGNIGRMVLDVFRMRSPEARHTLLATGAASGLSAAFNAPLAGILFIIEEMRPQFRYNLISIKAVFTGVIMSSIVFRIFNGEAAIIEVGKLSNAPVNTLWLYLVLGMLFGCFGPLFNFLVLRTQDLFQRIHGGNIKKWVLIGGLIGGLCGLLGLMQPSAVGGGFNLIPIAAAGNFSVGLLLFIFIARVVTTLICFSSGAPGGIFAPMLALGTLLGTAFGMAAIPLFPAYHLDAGTFAIAGMGALLAASVRAPLTGIVLVLEMTDNYQLILPMIITCLGATLLAQFLGGKPLYSTILQRTLAKQEAEQAAKAQQAPRENT</sequence>
<name>CLCA_KLEP7</name>
<evidence type="ECO:0000255" key="1">
    <source>
        <dbReference type="HAMAP-Rule" id="MF_01128"/>
    </source>
</evidence>